<organism>
    <name type="scientific">Schizosaccharomyces pombe (strain 972 / ATCC 24843)</name>
    <name type="common">Fission yeast</name>
    <dbReference type="NCBI Taxonomy" id="284812"/>
    <lineage>
        <taxon>Eukaryota</taxon>
        <taxon>Fungi</taxon>
        <taxon>Dikarya</taxon>
        <taxon>Ascomycota</taxon>
        <taxon>Taphrinomycotina</taxon>
        <taxon>Schizosaccharomycetes</taxon>
        <taxon>Schizosaccharomycetales</taxon>
        <taxon>Schizosaccharomycetaceae</taxon>
        <taxon>Schizosaccharomyces</taxon>
    </lineage>
</organism>
<comment type="subcellular location">
    <subcellularLocation>
        <location evidence="2">Cytoplasm</location>
    </subcellularLocation>
    <subcellularLocation>
        <location evidence="2">Golgi apparatus</location>
    </subcellularLocation>
</comment>
<reference key="1">
    <citation type="journal article" date="2002" name="Nature">
        <title>The genome sequence of Schizosaccharomyces pombe.</title>
        <authorList>
            <person name="Wood V."/>
            <person name="Gwilliam R."/>
            <person name="Rajandream M.A."/>
            <person name="Lyne M.H."/>
            <person name="Lyne R."/>
            <person name="Stewart A."/>
            <person name="Sgouros J.G."/>
            <person name="Peat N."/>
            <person name="Hayles J."/>
            <person name="Baker S.G."/>
            <person name="Basham D."/>
            <person name="Bowman S."/>
            <person name="Brooks K."/>
            <person name="Brown D."/>
            <person name="Brown S."/>
            <person name="Chillingworth T."/>
            <person name="Churcher C.M."/>
            <person name="Collins M."/>
            <person name="Connor R."/>
            <person name="Cronin A."/>
            <person name="Davis P."/>
            <person name="Feltwell T."/>
            <person name="Fraser A."/>
            <person name="Gentles S."/>
            <person name="Goble A."/>
            <person name="Hamlin N."/>
            <person name="Harris D.E."/>
            <person name="Hidalgo J."/>
            <person name="Hodgson G."/>
            <person name="Holroyd S."/>
            <person name="Hornsby T."/>
            <person name="Howarth S."/>
            <person name="Huckle E.J."/>
            <person name="Hunt S."/>
            <person name="Jagels K."/>
            <person name="James K.D."/>
            <person name="Jones L."/>
            <person name="Jones M."/>
            <person name="Leather S."/>
            <person name="McDonald S."/>
            <person name="McLean J."/>
            <person name="Mooney P."/>
            <person name="Moule S."/>
            <person name="Mungall K.L."/>
            <person name="Murphy L.D."/>
            <person name="Niblett D."/>
            <person name="Odell C."/>
            <person name="Oliver K."/>
            <person name="O'Neil S."/>
            <person name="Pearson D."/>
            <person name="Quail M.A."/>
            <person name="Rabbinowitsch E."/>
            <person name="Rutherford K.M."/>
            <person name="Rutter S."/>
            <person name="Saunders D."/>
            <person name="Seeger K."/>
            <person name="Sharp S."/>
            <person name="Skelton J."/>
            <person name="Simmonds M.N."/>
            <person name="Squares R."/>
            <person name="Squares S."/>
            <person name="Stevens K."/>
            <person name="Taylor K."/>
            <person name="Taylor R.G."/>
            <person name="Tivey A."/>
            <person name="Walsh S.V."/>
            <person name="Warren T."/>
            <person name="Whitehead S."/>
            <person name="Woodward J.R."/>
            <person name="Volckaert G."/>
            <person name="Aert R."/>
            <person name="Robben J."/>
            <person name="Grymonprez B."/>
            <person name="Weltjens I."/>
            <person name="Vanstreels E."/>
            <person name="Rieger M."/>
            <person name="Schaefer M."/>
            <person name="Mueller-Auer S."/>
            <person name="Gabel C."/>
            <person name="Fuchs M."/>
            <person name="Duesterhoeft A."/>
            <person name="Fritzc C."/>
            <person name="Holzer E."/>
            <person name="Moestl D."/>
            <person name="Hilbert H."/>
            <person name="Borzym K."/>
            <person name="Langer I."/>
            <person name="Beck A."/>
            <person name="Lehrach H."/>
            <person name="Reinhardt R."/>
            <person name="Pohl T.M."/>
            <person name="Eger P."/>
            <person name="Zimmermann W."/>
            <person name="Wedler H."/>
            <person name="Wambutt R."/>
            <person name="Purnelle B."/>
            <person name="Goffeau A."/>
            <person name="Cadieu E."/>
            <person name="Dreano S."/>
            <person name="Gloux S."/>
            <person name="Lelaure V."/>
            <person name="Mottier S."/>
            <person name="Galibert F."/>
            <person name="Aves S.J."/>
            <person name="Xiang Z."/>
            <person name="Hunt C."/>
            <person name="Moore K."/>
            <person name="Hurst S.M."/>
            <person name="Lucas M."/>
            <person name="Rochet M."/>
            <person name="Gaillardin C."/>
            <person name="Tallada V.A."/>
            <person name="Garzon A."/>
            <person name="Thode G."/>
            <person name="Daga R.R."/>
            <person name="Cruzado L."/>
            <person name="Jimenez J."/>
            <person name="Sanchez M."/>
            <person name="del Rey F."/>
            <person name="Benito J."/>
            <person name="Dominguez A."/>
            <person name="Revuelta J.L."/>
            <person name="Moreno S."/>
            <person name="Armstrong J."/>
            <person name="Forsburg S.L."/>
            <person name="Cerutti L."/>
            <person name="Lowe T."/>
            <person name="McCombie W.R."/>
            <person name="Paulsen I."/>
            <person name="Potashkin J."/>
            <person name="Shpakovski G.V."/>
            <person name="Ussery D."/>
            <person name="Barrell B.G."/>
            <person name="Nurse P."/>
        </authorList>
    </citation>
    <scope>NUCLEOTIDE SEQUENCE [LARGE SCALE GENOMIC DNA]</scope>
    <source>
        <strain>972 / ATCC 24843</strain>
    </source>
</reference>
<reference key="2">
    <citation type="journal article" date="2006" name="Nat. Biotechnol.">
        <title>ORFeome cloning and global analysis of protein localization in the fission yeast Schizosaccharomyces pombe.</title>
        <authorList>
            <person name="Matsuyama A."/>
            <person name="Arai R."/>
            <person name="Yashiroda Y."/>
            <person name="Shirai A."/>
            <person name="Kamata A."/>
            <person name="Sekido S."/>
            <person name="Kobayashi Y."/>
            <person name="Hashimoto A."/>
            <person name="Hamamoto M."/>
            <person name="Hiraoka Y."/>
            <person name="Horinouchi S."/>
            <person name="Yoshida M."/>
        </authorList>
    </citation>
    <scope>SUBCELLULAR LOCATION [LARGE SCALE ANALYSIS]</scope>
</reference>
<proteinExistence type="predicted"/>
<feature type="chain" id="PRO_0000317098" description="Dilute domain-containing protein SPAC25B8.08">
    <location>
        <begin position="1"/>
        <end position="573"/>
    </location>
</feature>
<feature type="domain" description="Dilute" evidence="1">
    <location>
        <begin position="180"/>
        <end position="464"/>
    </location>
</feature>
<evidence type="ECO:0000255" key="1">
    <source>
        <dbReference type="PROSITE-ProRule" id="PRU00503"/>
    </source>
</evidence>
<evidence type="ECO:0000269" key="2">
    <source>
    </source>
</evidence>
<evidence type="ECO:0000312" key="3">
    <source>
        <dbReference type="PomBase" id="SPAC25B8.08"/>
    </source>
</evidence>
<gene>
    <name evidence="3" type="ORF">SPAC25B8.08</name>
</gene>
<sequence length="573" mass="65980">MDQWSDNKDAIGMLSESLKEKVVTNEIAPALKEVKNHKYNFETEILNTGNVWNNDSKNGESGSAFGLDKIFQSSDSGNIAEGLELDLGNIMLETHNLESPAWKHADYDGVAASVNDNNNDWKFFVFDEREIDSMLQLFVRDFRADKPALRLAPSKLFYLASRFAFFYMPKEKELGTVLLNAFLCEVNQVTQQHPNDMVLCVQWLANVSLLLFYLKKDNKLDDLTVDIQNRCSELMNSLYITICQDAMRRMNENLEEGMVKYTGIQGLEDILRSRSWNLLRRRPTNDASTSPRSTPSASPRSITKIIASTLHLLEVFYIHPLIRAQCIEQLFSWLGARLFNIVISNKKYLSRAAAMETRFNISSLEEWSQTNSPKLQKPFDYPDEDLKVDLISKLLSLVQLLQWLQCLYRLSEDEDPRALQETLESLDALNPRQIYTAAKLYRPDITETKVSKTFLKKLDAFHEEKLREKINSSDKGDVSYEFELLKDETVFSPLKLPTKAQLINAYSYIVSGNGFNEDRKIVFQPHVSNILIDKLEENGLSMERAELPTSVFEDELQRREWRPDQEVEELLST</sequence>
<name>YL88_SCHPO</name>
<dbReference type="EMBL" id="CU329670">
    <property type="protein sequence ID" value="CAK9838728.1"/>
    <property type="molecule type" value="Genomic_DNA"/>
</dbReference>
<dbReference type="PIR" id="T50195">
    <property type="entry name" value="T50195"/>
</dbReference>
<dbReference type="RefSeq" id="NP_594468.1">
    <property type="nucleotide sequence ID" value="NM_001019897.2"/>
</dbReference>
<dbReference type="SMR" id="Q9UTB0"/>
<dbReference type="BioGRID" id="279112">
    <property type="interactions" value="8"/>
</dbReference>
<dbReference type="FunCoup" id="Q9UTB0">
    <property type="interactions" value="73"/>
</dbReference>
<dbReference type="STRING" id="284812.Q9UTB0"/>
<dbReference type="iPTMnet" id="Q9UTB0"/>
<dbReference type="PaxDb" id="4896-SPAC25B8.08.1"/>
<dbReference type="EnsemblFungi" id="SPAC25B8.08.1">
    <property type="protein sequence ID" value="SPAC25B8.08.1:pep"/>
    <property type="gene ID" value="SPAC25B8.08"/>
</dbReference>
<dbReference type="KEGG" id="spo:2542659"/>
<dbReference type="PomBase" id="SPAC25B8.08"/>
<dbReference type="VEuPathDB" id="FungiDB:SPAC25B8.08"/>
<dbReference type="eggNOG" id="ENOG502QRMC">
    <property type="taxonomic scope" value="Eukaryota"/>
</dbReference>
<dbReference type="HOGENOM" id="CLU_491033_0_0_1"/>
<dbReference type="InParanoid" id="Q9UTB0"/>
<dbReference type="OMA" id="WLQCLYR"/>
<dbReference type="PhylomeDB" id="Q9UTB0"/>
<dbReference type="PRO" id="PR:Q9UTB0"/>
<dbReference type="Proteomes" id="UP000002485">
    <property type="component" value="Chromosome I"/>
</dbReference>
<dbReference type="GO" id="GO:0005737">
    <property type="term" value="C:cytoplasm"/>
    <property type="evidence" value="ECO:0007005"/>
    <property type="project" value="PomBase"/>
</dbReference>
<dbReference type="GO" id="GO:0005794">
    <property type="term" value="C:Golgi apparatus"/>
    <property type="evidence" value="ECO:0007005"/>
    <property type="project" value="PomBase"/>
</dbReference>
<dbReference type="GO" id="GO:0051020">
    <property type="term" value="F:GTPase binding"/>
    <property type="evidence" value="ECO:0000318"/>
    <property type="project" value="GO_Central"/>
</dbReference>
<dbReference type="CDD" id="cd15473">
    <property type="entry name" value="Myo5p-like_CBD_DIL_ANK"/>
    <property type="match status" value="1"/>
</dbReference>
<dbReference type="InterPro" id="IPR002710">
    <property type="entry name" value="Dilute_dom"/>
</dbReference>
<dbReference type="InterPro" id="IPR037986">
    <property type="entry name" value="Myo5p-like_CBD_DIL"/>
</dbReference>
<dbReference type="InterPro" id="IPR052072">
    <property type="entry name" value="Vascular_dev_regulator"/>
</dbReference>
<dbReference type="PANTHER" id="PTHR16027:SF6">
    <property type="entry name" value="DILUTE DOMAIN-CONTAINING PROTEIN"/>
    <property type="match status" value="1"/>
</dbReference>
<dbReference type="PANTHER" id="PTHR16027">
    <property type="entry name" value="DILUTE DOMAIN-CONTAINING PROTEIN YPR089W"/>
    <property type="match status" value="1"/>
</dbReference>
<dbReference type="Pfam" id="PF01843">
    <property type="entry name" value="DIL"/>
    <property type="match status" value="1"/>
</dbReference>
<dbReference type="SMART" id="SM01132">
    <property type="entry name" value="DIL"/>
    <property type="match status" value="1"/>
</dbReference>
<dbReference type="PROSITE" id="PS51126">
    <property type="entry name" value="DILUTE"/>
    <property type="match status" value="1"/>
</dbReference>
<keyword id="KW-0963">Cytoplasm</keyword>
<keyword id="KW-0333">Golgi apparatus</keyword>
<keyword id="KW-1185">Reference proteome</keyword>
<protein>
    <recommendedName>
        <fullName>Dilute domain-containing protein SPAC25B8.08</fullName>
    </recommendedName>
</protein>
<accession>Q9UTB0</accession>
<accession>A0AAN2H6A0</accession>